<sequence>MADRNLRDLLAPWVAGLPARELREMTLDSRVAAAGDLFVAVVGHQADGRRYIPQAIAQGVAAIIVEAKDEATDGEIREMHGVPVVYLSQLNERLSALAGRFYHEPSENMRLVAVTGTNGKTTTTQLLAQWSQLLGETSAVMGTVGNGLLGKVIPTENTTGSAVDVQHVLASLVAQGATFGAMEVSSHGLVQHRVAALKFAASVFTNLSRDHLDYHGDMAHYEAAKWMLYSTHHHGQAIVNADDEVGRRWLASLPDAVAVSMEGHINPNCHGRWLKAEAVEYHDRGATIRFASSWGEGEIESRLMGAFNVSNLLLALATLLALGYPLTDLLKTAARLQPVCGRMEVFTAPGKPTVVVDYAHTPDALEKALQAARLHCAGKLWCVFGCGGDRDKGKRPLMGAIAEEFADIVVVTDDNPRTEEPRAIINDILAGMLDAGQVRVMEGRAEAVTNAIMQAKDNDVVLIAGKGHEDYQIVGTQRLDYSDRVTAARLLGVIA</sequence>
<accession>Q5PDH1</accession>
<proteinExistence type="inferred from homology"/>
<organism>
    <name type="scientific">Salmonella paratyphi A (strain ATCC 9150 / SARB42)</name>
    <dbReference type="NCBI Taxonomy" id="295319"/>
    <lineage>
        <taxon>Bacteria</taxon>
        <taxon>Pseudomonadati</taxon>
        <taxon>Pseudomonadota</taxon>
        <taxon>Gammaproteobacteria</taxon>
        <taxon>Enterobacterales</taxon>
        <taxon>Enterobacteriaceae</taxon>
        <taxon>Salmonella</taxon>
    </lineage>
</organism>
<name>MURE_SALPA</name>
<feature type="chain" id="PRO_1000012377" description="UDP-N-acetylmuramoyl-L-alanyl-D-glutamate--2,6-diaminopimelate ligase">
    <location>
        <begin position="1"/>
        <end position="495"/>
    </location>
</feature>
<feature type="short sequence motif" description="Meso-diaminopimelate recognition motif">
    <location>
        <begin position="414"/>
        <end position="417"/>
    </location>
</feature>
<feature type="binding site" evidence="1">
    <location>
        <position position="27"/>
    </location>
    <ligand>
        <name>UDP-N-acetyl-alpha-D-muramoyl-L-alanyl-D-glutamate</name>
        <dbReference type="ChEBI" id="CHEBI:83900"/>
    </ligand>
</feature>
<feature type="binding site" evidence="1">
    <location>
        <position position="29"/>
    </location>
    <ligand>
        <name>UDP-N-acetyl-alpha-D-muramoyl-L-alanyl-D-glutamate</name>
        <dbReference type="ChEBI" id="CHEBI:83900"/>
    </ligand>
</feature>
<feature type="binding site" evidence="1">
    <location>
        <begin position="44"/>
        <end position="46"/>
    </location>
    <ligand>
        <name>UDP-N-acetyl-alpha-D-muramoyl-L-alanyl-D-glutamate</name>
        <dbReference type="ChEBI" id="CHEBI:83900"/>
    </ligand>
</feature>
<feature type="binding site" evidence="1">
    <location>
        <begin position="116"/>
        <end position="122"/>
    </location>
    <ligand>
        <name>ATP</name>
        <dbReference type="ChEBI" id="CHEBI:30616"/>
    </ligand>
</feature>
<feature type="binding site" evidence="1">
    <location>
        <position position="157"/>
    </location>
    <ligand>
        <name>UDP-N-acetyl-alpha-D-muramoyl-L-alanyl-D-glutamate</name>
        <dbReference type="ChEBI" id="CHEBI:83900"/>
    </ligand>
</feature>
<feature type="binding site" evidence="1">
    <location>
        <begin position="158"/>
        <end position="159"/>
    </location>
    <ligand>
        <name>UDP-N-acetyl-alpha-D-muramoyl-L-alanyl-D-glutamate</name>
        <dbReference type="ChEBI" id="CHEBI:83900"/>
    </ligand>
</feature>
<feature type="binding site" evidence="1">
    <location>
        <position position="185"/>
    </location>
    <ligand>
        <name>UDP-N-acetyl-alpha-D-muramoyl-L-alanyl-D-glutamate</name>
        <dbReference type="ChEBI" id="CHEBI:83900"/>
    </ligand>
</feature>
<feature type="binding site" evidence="1">
    <location>
        <position position="191"/>
    </location>
    <ligand>
        <name>UDP-N-acetyl-alpha-D-muramoyl-L-alanyl-D-glutamate</name>
        <dbReference type="ChEBI" id="CHEBI:83900"/>
    </ligand>
</feature>
<feature type="binding site" evidence="1">
    <location>
        <position position="193"/>
    </location>
    <ligand>
        <name>UDP-N-acetyl-alpha-D-muramoyl-L-alanyl-D-glutamate</name>
        <dbReference type="ChEBI" id="CHEBI:83900"/>
    </ligand>
</feature>
<feature type="binding site" evidence="1">
    <location>
        <position position="390"/>
    </location>
    <ligand>
        <name>meso-2,6-diaminopimelate</name>
        <dbReference type="ChEBI" id="CHEBI:57791"/>
    </ligand>
</feature>
<feature type="binding site" evidence="1">
    <location>
        <begin position="414"/>
        <end position="417"/>
    </location>
    <ligand>
        <name>meso-2,6-diaminopimelate</name>
        <dbReference type="ChEBI" id="CHEBI:57791"/>
    </ligand>
</feature>
<feature type="binding site" evidence="1">
    <location>
        <position position="465"/>
    </location>
    <ligand>
        <name>meso-2,6-diaminopimelate</name>
        <dbReference type="ChEBI" id="CHEBI:57791"/>
    </ligand>
</feature>
<feature type="binding site" evidence="1">
    <location>
        <position position="469"/>
    </location>
    <ligand>
        <name>meso-2,6-diaminopimelate</name>
        <dbReference type="ChEBI" id="CHEBI:57791"/>
    </ligand>
</feature>
<feature type="modified residue" description="N6-carboxylysine" evidence="1">
    <location>
        <position position="225"/>
    </location>
</feature>
<reference key="1">
    <citation type="journal article" date="2004" name="Nat. Genet.">
        <title>Comparison of genome degradation in Paratyphi A and Typhi, human-restricted serovars of Salmonella enterica that cause typhoid.</title>
        <authorList>
            <person name="McClelland M."/>
            <person name="Sanderson K.E."/>
            <person name="Clifton S.W."/>
            <person name="Latreille P."/>
            <person name="Porwollik S."/>
            <person name="Sabo A."/>
            <person name="Meyer R."/>
            <person name="Bieri T."/>
            <person name="Ozersky P."/>
            <person name="McLellan M."/>
            <person name="Harkins C.R."/>
            <person name="Wang C."/>
            <person name="Nguyen C."/>
            <person name="Berghoff A."/>
            <person name="Elliott G."/>
            <person name="Kohlberg S."/>
            <person name="Strong C."/>
            <person name="Du F."/>
            <person name="Carter J."/>
            <person name="Kremizki C."/>
            <person name="Layman D."/>
            <person name="Leonard S."/>
            <person name="Sun H."/>
            <person name="Fulton L."/>
            <person name="Nash W."/>
            <person name="Miner T."/>
            <person name="Minx P."/>
            <person name="Delehaunty K."/>
            <person name="Fronick C."/>
            <person name="Magrini V."/>
            <person name="Nhan M."/>
            <person name="Warren W."/>
            <person name="Florea L."/>
            <person name="Spieth J."/>
            <person name="Wilson R.K."/>
        </authorList>
    </citation>
    <scope>NUCLEOTIDE SEQUENCE [LARGE SCALE GENOMIC DNA]</scope>
    <source>
        <strain>ATCC 9150 / SARB42</strain>
    </source>
</reference>
<dbReference type="EC" id="6.3.2.13" evidence="1"/>
<dbReference type="EMBL" id="CP000026">
    <property type="protein sequence ID" value="AAV76158.1"/>
    <property type="molecule type" value="Genomic_DNA"/>
</dbReference>
<dbReference type="RefSeq" id="WP_000775086.1">
    <property type="nucleotide sequence ID" value="NC_006511.1"/>
</dbReference>
<dbReference type="SMR" id="Q5PDH1"/>
<dbReference type="KEGG" id="spt:SPA0125"/>
<dbReference type="HOGENOM" id="CLU_022291_3_2_6"/>
<dbReference type="UniPathway" id="UPA00219"/>
<dbReference type="Proteomes" id="UP000008185">
    <property type="component" value="Chromosome"/>
</dbReference>
<dbReference type="GO" id="GO:0005737">
    <property type="term" value="C:cytoplasm"/>
    <property type="evidence" value="ECO:0007669"/>
    <property type="project" value="UniProtKB-SubCell"/>
</dbReference>
<dbReference type="GO" id="GO:0005524">
    <property type="term" value="F:ATP binding"/>
    <property type="evidence" value="ECO:0007669"/>
    <property type="project" value="UniProtKB-UniRule"/>
</dbReference>
<dbReference type="GO" id="GO:0000287">
    <property type="term" value="F:magnesium ion binding"/>
    <property type="evidence" value="ECO:0007669"/>
    <property type="project" value="UniProtKB-UniRule"/>
</dbReference>
<dbReference type="GO" id="GO:0008765">
    <property type="term" value="F:UDP-N-acetylmuramoylalanyl-D-glutamate-2,6-diaminopimelate ligase activity"/>
    <property type="evidence" value="ECO:0007669"/>
    <property type="project" value="UniProtKB-UniRule"/>
</dbReference>
<dbReference type="GO" id="GO:0051301">
    <property type="term" value="P:cell division"/>
    <property type="evidence" value="ECO:0007669"/>
    <property type="project" value="UniProtKB-KW"/>
</dbReference>
<dbReference type="GO" id="GO:0071555">
    <property type="term" value="P:cell wall organization"/>
    <property type="evidence" value="ECO:0007669"/>
    <property type="project" value="UniProtKB-KW"/>
</dbReference>
<dbReference type="GO" id="GO:0009252">
    <property type="term" value="P:peptidoglycan biosynthetic process"/>
    <property type="evidence" value="ECO:0007669"/>
    <property type="project" value="UniProtKB-UniRule"/>
</dbReference>
<dbReference type="GO" id="GO:0008360">
    <property type="term" value="P:regulation of cell shape"/>
    <property type="evidence" value="ECO:0007669"/>
    <property type="project" value="UniProtKB-KW"/>
</dbReference>
<dbReference type="FunFam" id="3.40.1190.10:FF:000006">
    <property type="entry name" value="UDP-N-acetylmuramoyl-L-alanyl-D-glutamate--2,6-diaminopimelate ligase"/>
    <property type="match status" value="1"/>
</dbReference>
<dbReference type="FunFam" id="3.40.1390.10:FF:000002">
    <property type="entry name" value="UDP-N-acetylmuramoyl-L-alanyl-D-glutamate--2,6-diaminopimelate ligase"/>
    <property type="match status" value="1"/>
</dbReference>
<dbReference type="FunFam" id="3.90.190.20:FF:000006">
    <property type="entry name" value="UDP-N-acetylmuramoyl-L-alanyl-D-glutamate--2,6-diaminopimelate ligase"/>
    <property type="match status" value="1"/>
</dbReference>
<dbReference type="Gene3D" id="3.90.190.20">
    <property type="entry name" value="Mur ligase, C-terminal domain"/>
    <property type="match status" value="1"/>
</dbReference>
<dbReference type="Gene3D" id="3.40.1190.10">
    <property type="entry name" value="Mur-like, catalytic domain"/>
    <property type="match status" value="1"/>
</dbReference>
<dbReference type="Gene3D" id="3.40.1390.10">
    <property type="entry name" value="MurE/MurF, N-terminal domain"/>
    <property type="match status" value="1"/>
</dbReference>
<dbReference type="HAMAP" id="MF_00208">
    <property type="entry name" value="MurE"/>
    <property type="match status" value="1"/>
</dbReference>
<dbReference type="InterPro" id="IPR036565">
    <property type="entry name" value="Mur-like_cat_sf"/>
</dbReference>
<dbReference type="InterPro" id="IPR004101">
    <property type="entry name" value="Mur_ligase_C"/>
</dbReference>
<dbReference type="InterPro" id="IPR036615">
    <property type="entry name" value="Mur_ligase_C_dom_sf"/>
</dbReference>
<dbReference type="InterPro" id="IPR013221">
    <property type="entry name" value="Mur_ligase_cen"/>
</dbReference>
<dbReference type="InterPro" id="IPR000713">
    <property type="entry name" value="Mur_ligase_N"/>
</dbReference>
<dbReference type="InterPro" id="IPR035911">
    <property type="entry name" value="MurE/MurF_N"/>
</dbReference>
<dbReference type="InterPro" id="IPR005761">
    <property type="entry name" value="UDP-N-AcMur-Glu-dNH2Pim_ligase"/>
</dbReference>
<dbReference type="NCBIfam" id="TIGR01085">
    <property type="entry name" value="murE"/>
    <property type="match status" value="1"/>
</dbReference>
<dbReference type="NCBIfam" id="NF001123">
    <property type="entry name" value="PRK00139.1-1"/>
    <property type="match status" value="1"/>
</dbReference>
<dbReference type="NCBIfam" id="NF001124">
    <property type="entry name" value="PRK00139.1-2"/>
    <property type="match status" value="1"/>
</dbReference>
<dbReference type="NCBIfam" id="NF001126">
    <property type="entry name" value="PRK00139.1-4"/>
    <property type="match status" value="1"/>
</dbReference>
<dbReference type="PANTHER" id="PTHR23135">
    <property type="entry name" value="MUR LIGASE FAMILY MEMBER"/>
    <property type="match status" value="1"/>
</dbReference>
<dbReference type="PANTHER" id="PTHR23135:SF4">
    <property type="entry name" value="UDP-N-ACETYLMURAMOYL-L-ALANYL-D-GLUTAMATE--2,6-DIAMINOPIMELATE LIGASE MURE HOMOLOG, CHLOROPLASTIC"/>
    <property type="match status" value="1"/>
</dbReference>
<dbReference type="Pfam" id="PF01225">
    <property type="entry name" value="Mur_ligase"/>
    <property type="match status" value="1"/>
</dbReference>
<dbReference type="Pfam" id="PF02875">
    <property type="entry name" value="Mur_ligase_C"/>
    <property type="match status" value="1"/>
</dbReference>
<dbReference type="Pfam" id="PF08245">
    <property type="entry name" value="Mur_ligase_M"/>
    <property type="match status" value="1"/>
</dbReference>
<dbReference type="SUPFAM" id="SSF53623">
    <property type="entry name" value="MurD-like peptide ligases, catalytic domain"/>
    <property type="match status" value="1"/>
</dbReference>
<dbReference type="SUPFAM" id="SSF53244">
    <property type="entry name" value="MurD-like peptide ligases, peptide-binding domain"/>
    <property type="match status" value="1"/>
</dbReference>
<dbReference type="SUPFAM" id="SSF63418">
    <property type="entry name" value="MurE/MurF N-terminal domain"/>
    <property type="match status" value="1"/>
</dbReference>
<gene>
    <name evidence="1" type="primary">murE</name>
    <name type="ordered locus">SPA0125</name>
</gene>
<protein>
    <recommendedName>
        <fullName evidence="1">UDP-N-acetylmuramoyl-L-alanyl-D-glutamate--2,6-diaminopimelate ligase</fullName>
        <ecNumber evidence="1">6.3.2.13</ecNumber>
    </recommendedName>
    <alternativeName>
        <fullName evidence="1">Meso-A2pm-adding enzyme</fullName>
    </alternativeName>
    <alternativeName>
        <fullName evidence="1">Meso-diaminopimelate-adding enzyme</fullName>
    </alternativeName>
    <alternativeName>
        <fullName evidence="1">UDP-MurNAc-L-Ala-D-Glu:meso-diaminopimelate ligase</fullName>
    </alternativeName>
    <alternativeName>
        <fullName evidence="1">UDP-MurNAc-tripeptide synthetase</fullName>
    </alternativeName>
    <alternativeName>
        <fullName evidence="1">UDP-N-acetylmuramyl-tripeptide synthetase</fullName>
    </alternativeName>
</protein>
<keyword id="KW-0067">ATP-binding</keyword>
<keyword id="KW-0131">Cell cycle</keyword>
<keyword id="KW-0132">Cell division</keyword>
<keyword id="KW-0133">Cell shape</keyword>
<keyword id="KW-0961">Cell wall biogenesis/degradation</keyword>
<keyword id="KW-0963">Cytoplasm</keyword>
<keyword id="KW-0436">Ligase</keyword>
<keyword id="KW-0460">Magnesium</keyword>
<keyword id="KW-0547">Nucleotide-binding</keyword>
<keyword id="KW-0573">Peptidoglycan synthesis</keyword>
<evidence type="ECO:0000255" key="1">
    <source>
        <dbReference type="HAMAP-Rule" id="MF_00208"/>
    </source>
</evidence>
<comment type="function">
    <text evidence="1">Catalyzes the addition of meso-diaminopimelic acid to the nucleotide precursor UDP-N-acetylmuramoyl-L-alanyl-D-glutamate (UMAG) in the biosynthesis of bacterial cell-wall peptidoglycan.</text>
</comment>
<comment type="catalytic activity">
    <reaction evidence="1">
        <text>UDP-N-acetyl-alpha-D-muramoyl-L-alanyl-D-glutamate + meso-2,6-diaminopimelate + ATP = UDP-N-acetyl-alpha-D-muramoyl-L-alanyl-gamma-D-glutamyl-meso-2,6-diaminopimelate + ADP + phosphate + H(+)</text>
        <dbReference type="Rhea" id="RHEA:23676"/>
        <dbReference type="ChEBI" id="CHEBI:15378"/>
        <dbReference type="ChEBI" id="CHEBI:30616"/>
        <dbReference type="ChEBI" id="CHEBI:43474"/>
        <dbReference type="ChEBI" id="CHEBI:57791"/>
        <dbReference type="ChEBI" id="CHEBI:83900"/>
        <dbReference type="ChEBI" id="CHEBI:83905"/>
        <dbReference type="ChEBI" id="CHEBI:456216"/>
        <dbReference type="EC" id="6.3.2.13"/>
    </reaction>
</comment>
<comment type="cofactor">
    <cofactor evidence="1">
        <name>Mg(2+)</name>
        <dbReference type="ChEBI" id="CHEBI:18420"/>
    </cofactor>
</comment>
<comment type="pathway">
    <text evidence="1">Cell wall biogenesis; peptidoglycan biosynthesis.</text>
</comment>
<comment type="subcellular location">
    <subcellularLocation>
        <location evidence="1">Cytoplasm</location>
    </subcellularLocation>
</comment>
<comment type="PTM">
    <text evidence="1">Carboxylation is probably crucial for Mg(2+) binding and, consequently, for the gamma-phosphate positioning of ATP.</text>
</comment>
<comment type="similarity">
    <text evidence="1">Belongs to the MurCDEF family. MurE subfamily.</text>
</comment>